<gene>
    <name type="ordered locus">APE_1547.1</name>
</gene>
<comment type="function">
    <text>This enzyme catalyzes the hydrolysis of the N-terminal peptide bond of an N-acetylated peptide to generate an N-acetylated amino acid and a peptide with a free N-terminus.</text>
</comment>
<comment type="catalytic activity">
    <reaction>
        <text>Cleavage of an N-acetyl or N-formyl amino acid from the N-terminus of a polypeptide.</text>
        <dbReference type="EC" id="3.4.19.1"/>
    </reaction>
</comment>
<comment type="subcellular location">
    <subcellularLocation>
        <location evidence="1">Cytoplasm</location>
    </subcellularLocation>
</comment>
<comment type="similarity">
    <text evidence="2">Belongs to the peptidase S9C family.</text>
</comment>
<comment type="sequence caution" evidence="2">
    <conflict type="erroneous initiation">
        <sequence resource="EMBL-CDS" id="BAA80546"/>
    </conflict>
</comment>
<organism>
    <name type="scientific">Aeropyrum pernix (strain ATCC 700893 / DSM 11879 / JCM 9820 / NBRC 100138 / K1)</name>
    <dbReference type="NCBI Taxonomy" id="272557"/>
    <lineage>
        <taxon>Archaea</taxon>
        <taxon>Thermoproteota</taxon>
        <taxon>Thermoprotei</taxon>
        <taxon>Desulfurococcales</taxon>
        <taxon>Desulfurococcaceae</taxon>
        <taxon>Aeropyrum</taxon>
    </lineage>
</organism>
<proteinExistence type="evidence at protein level"/>
<accession>Q9YBQ2</accession>
<name>APEH_AERPE</name>
<protein>
    <recommendedName>
        <fullName>Acylamino-acid-releasing enzyme</fullName>
        <shortName>AARE</shortName>
        <ecNumber>3.4.19.1</ecNumber>
    </recommendedName>
    <alternativeName>
        <fullName>Acyl-peptide hydrolase</fullName>
        <shortName>APH</shortName>
    </alternativeName>
    <alternativeName>
        <fullName>Acylaminoacyl-peptidase</fullName>
    </alternativeName>
</protein>
<evidence type="ECO:0000250" key="1"/>
<evidence type="ECO:0000305" key="2"/>
<evidence type="ECO:0007829" key="3">
    <source>
        <dbReference type="PDB" id="2QR5"/>
    </source>
</evidence>
<evidence type="ECO:0007829" key="4">
    <source>
        <dbReference type="PDB" id="2QZP"/>
    </source>
</evidence>
<evidence type="ECO:0007829" key="5">
    <source>
        <dbReference type="PDB" id="3O4H"/>
    </source>
</evidence>
<evidence type="ECO:0007829" key="6">
    <source>
        <dbReference type="PDB" id="4RE5"/>
    </source>
</evidence>
<dbReference type="EC" id="3.4.19.1"/>
<dbReference type="EMBL" id="BA000002">
    <property type="protein sequence ID" value="BAA80546.2"/>
    <property type="status" value="ALT_INIT"/>
    <property type="molecule type" value="Genomic_DNA"/>
</dbReference>
<dbReference type="PIR" id="D72636">
    <property type="entry name" value="D72636"/>
</dbReference>
<dbReference type="PDB" id="1VE6">
    <property type="method" value="X-ray"/>
    <property type="resolution" value="2.10 A"/>
    <property type="chains" value="A/B=1-582"/>
</dbReference>
<dbReference type="PDB" id="1VE7">
    <property type="method" value="X-ray"/>
    <property type="resolution" value="2.70 A"/>
    <property type="chains" value="A/B=1-582"/>
</dbReference>
<dbReference type="PDB" id="2HU5">
    <property type="method" value="X-ray"/>
    <property type="resolution" value="2.00 A"/>
    <property type="chains" value="A/B=1-582"/>
</dbReference>
<dbReference type="PDB" id="2HU7">
    <property type="method" value="X-ray"/>
    <property type="resolution" value="2.01 A"/>
    <property type="chains" value="A/B=1-582"/>
</dbReference>
<dbReference type="PDB" id="2HU8">
    <property type="method" value="X-ray"/>
    <property type="resolution" value="2.40 A"/>
    <property type="chains" value="A/B=1-582"/>
</dbReference>
<dbReference type="PDB" id="2QR5">
    <property type="method" value="X-ray"/>
    <property type="resolution" value="2.20 A"/>
    <property type="chains" value="A/B=1-582"/>
</dbReference>
<dbReference type="PDB" id="2QZP">
    <property type="method" value="X-ray"/>
    <property type="resolution" value="2.70 A"/>
    <property type="chains" value="A/B=21-582"/>
</dbReference>
<dbReference type="PDB" id="3O4G">
    <property type="method" value="X-ray"/>
    <property type="resolution" value="2.50 A"/>
    <property type="chains" value="A/B/C/D=1-582"/>
</dbReference>
<dbReference type="PDB" id="3O4H">
    <property type="method" value="X-ray"/>
    <property type="resolution" value="1.82 A"/>
    <property type="chains" value="A/B/C/D=1-582"/>
</dbReference>
<dbReference type="PDB" id="3O4I">
    <property type="method" value="X-ray"/>
    <property type="resolution" value="2.70 A"/>
    <property type="chains" value="A/B=1-582"/>
</dbReference>
<dbReference type="PDB" id="3O4J">
    <property type="method" value="X-ray"/>
    <property type="resolution" value="2.50 A"/>
    <property type="chains" value="A/B/C/D=1-582"/>
</dbReference>
<dbReference type="PDB" id="4RE5">
    <property type="method" value="X-ray"/>
    <property type="resolution" value="1.90 A"/>
    <property type="chains" value="A/B=1-582"/>
</dbReference>
<dbReference type="PDB" id="4RE6">
    <property type="method" value="X-ray"/>
    <property type="resolution" value="2.55 A"/>
    <property type="chains" value="A/B/C/D=1-582"/>
</dbReference>
<dbReference type="PDBsum" id="1VE6"/>
<dbReference type="PDBsum" id="1VE7"/>
<dbReference type="PDBsum" id="2HU5"/>
<dbReference type="PDBsum" id="2HU7"/>
<dbReference type="PDBsum" id="2HU8"/>
<dbReference type="PDBsum" id="2QR5"/>
<dbReference type="PDBsum" id="2QZP"/>
<dbReference type="PDBsum" id="3O4G"/>
<dbReference type="PDBsum" id="3O4H"/>
<dbReference type="PDBsum" id="3O4I"/>
<dbReference type="PDBsum" id="3O4J"/>
<dbReference type="PDBsum" id="4RE5"/>
<dbReference type="PDBsum" id="4RE6"/>
<dbReference type="SMR" id="Q9YBQ2"/>
<dbReference type="STRING" id="272557.APE_1547.1"/>
<dbReference type="ESTHER" id="aerpe-APE1547">
    <property type="family name" value="ACPH_Peptidase_S9"/>
</dbReference>
<dbReference type="MEROPS" id="S09.070"/>
<dbReference type="EnsemblBacteria" id="BAA80546">
    <property type="protein sequence ID" value="BAA80546"/>
    <property type="gene ID" value="APE_1547.1"/>
</dbReference>
<dbReference type="KEGG" id="ape:APE_1547.1"/>
<dbReference type="eggNOG" id="arCOG01646">
    <property type="taxonomic scope" value="Archaea"/>
</dbReference>
<dbReference type="BRENDA" id="3.1.1.1">
    <property type="organism ID" value="171"/>
</dbReference>
<dbReference type="BRENDA" id="3.4.19.1">
    <property type="organism ID" value="171"/>
</dbReference>
<dbReference type="EvolutionaryTrace" id="Q9YBQ2"/>
<dbReference type="Proteomes" id="UP000002518">
    <property type="component" value="Chromosome"/>
</dbReference>
<dbReference type="GO" id="GO:0005737">
    <property type="term" value="C:cytoplasm"/>
    <property type="evidence" value="ECO:0007669"/>
    <property type="project" value="UniProtKB-SubCell"/>
</dbReference>
<dbReference type="GO" id="GO:0008242">
    <property type="term" value="F:omega peptidase activity"/>
    <property type="evidence" value="ECO:0007669"/>
    <property type="project" value="UniProtKB-EC"/>
</dbReference>
<dbReference type="GO" id="GO:0004252">
    <property type="term" value="F:serine-type endopeptidase activity"/>
    <property type="evidence" value="ECO:0007669"/>
    <property type="project" value="TreeGrafter"/>
</dbReference>
<dbReference type="GO" id="GO:0006508">
    <property type="term" value="P:proteolysis"/>
    <property type="evidence" value="ECO:0007669"/>
    <property type="project" value="InterPro"/>
</dbReference>
<dbReference type="Gene3D" id="3.40.50.1820">
    <property type="entry name" value="alpha/beta hydrolase"/>
    <property type="match status" value="1"/>
</dbReference>
<dbReference type="Gene3D" id="2.130.10.150">
    <property type="entry name" value="Peptidase/esterase 'gauge' domain"/>
    <property type="match status" value="1"/>
</dbReference>
<dbReference type="InterPro" id="IPR029058">
    <property type="entry name" value="AB_hydrolase_fold"/>
</dbReference>
<dbReference type="InterPro" id="IPR054035">
    <property type="entry name" value="APH-like_N"/>
</dbReference>
<dbReference type="InterPro" id="IPR001375">
    <property type="entry name" value="Peptidase_S9_cat"/>
</dbReference>
<dbReference type="PANTHER" id="PTHR42776:SF27">
    <property type="entry name" value="DIPEPTIDYL PEPTIDASE FAMILY MEMBER 6"/>
    <property type="match status" value="1"/>
</dbReference>
<dbReference type="PANTHER" id="PTHR42776">
    <property type="entry name" value="SERINE PEPTIDASE S9 FAMILY MEMBER"/>
    <property type="match status" value="1"/>
</dbReference>
<dbReference type="Pfam" id="PF22173">
    <property type="entry name" value="APH-like_N"/>
    <property type="match status" value="1"/>
</dbReference>
<dbReference type="Pfam" id="PF00326">
    <property type="entry name" value="Peptidase_S9"/>
    <property type="match status" value="1"/>
</dbReference>
<dbReference type="SUPFAM" id="SSF53474">
    <property type="entry name" value="alpha/beta-Hydrolases"/>
    <property type="match status" value="1"/>
</dbReference>
<dbReference type="SUPFAM" id="SSF50993">
    <property type="entry name" value="Peptidase/esterase 'gauge' domain"/>
    <property type="match status" value="1"/>
</dbReference>
<reference key="1">
    <citation type="journal article" date="1999" name="DNA Res.">
        <title>Complete genome sequence of an aerobic hyper-thermophilic crenarchaeon, Aeropyrum pernix K1.</title>
        <authorList>
            <person name="Kawarabayasi Y."/>
            <person name="Hino Y."/>
            <person name="Horikawa H."/>
            <person name="Yamazaki S."/>
            <person name="Haikawa Y."/>
            <person name="Jin-no K."/>
            <person name="Takahashi M."/>
            <person name="Sekine M."/>
            <person name="Baba S."/>
            <person name="Ankai A."/>
            <person name="Kosugi H."/>
            <person name="Hosoyama A."/>
            <person name="Fukui S."/>
            <person name="Nagai Y."/>
            <person name="Nishijima K."/>
            <person name="Nakazawa H."/>
            <person name="Takamiya M."/>
            <person name="Masuda S."/>
            <person name="Funahashi T."/>
            <person name="Tanaka T."/>
            <person name="Kudoh Y."/>
            <person name="Yamazaki J."/>
            <person name="Kushida N."/>
            <person name="Oguchi A."/>
            <person name="Aoki K."/>
            <person name="Kubota K."/>
            <person name="Nakamura Y."/>
            <person name="Nomura N."/>
            <person name="Sako Y."/>
            <person name="Kikuchi H."/>
        </authorList>
    </citation>
    <scope>NUCLEOTIDE SEQUENCE [LARGE SCALE GENOMIC DNA]</scope>
    <source>
        <strain>ATCC 700893 / DSM 11879 / JCM 9820 / NBRC 100138 / K1</strain>
    </source>
</reference>
<reference key="2">
    <citation type="journal article" date="2002" name="Acta Crystallogr. D">
        <title>Crystallization and preliminary crystallographic analysis of acylamino-acid releasing enzyme from the hyperthermophilic archaeon Aeropyrum pernix.</title>
        <authorList>
            <person name="Wang G."/>
            <person name="Gao R."/>
            <person name="Ding Y."/>
            <person name="Yang H."/>
            <person name="Cao S."/>
            <person name="Feng Y."/>
            <person name="Rao Z."/>
        </authorList>
    </citation>
    <scope>CRYSTALLIZATION</scope>
    <source>
        <strain>ATCC 700893 / DSM 11879 / JCM 9820 / NBRC 100138 / K1</strain>
    </source>
</reference>
<sequence>MRIIMPVEFSRIVRDVERLIAVEKYSLQGVVDGDKLLVVGFSEGSVNAYLYDGGETVKLNREPINSVLDPHYGVGRVILVRDVSKGAEQHALFKVNTSRPGEEQRLEAVKPMRILSGVDTGEAVVFTGATEDRVALYALDGGGLRELARLPGFGFVSDIRGDLIAGLGFFGGGRVSLFTSNLSSGGLRVFDSGEGSFSSASISPGMKVTAGLETAREARLVTVDPRDGSVEDLELPSKDFSSYRPTAITWLGYLPDGRLAVVARREGRSAVFIDGERVEAPQGNHGRVVLWRGKLVTSHTSLSTPPRIVSLPSGEPLLEGGLPEDLRRSIAGSRLVWVESFDGSRVPTYVLESGRAPTPGPTVVLVHGGPFAEDSDSWDTFAASLAAAGFHVVMPNYRGSTGYGEEWRLKIIGDPCGGELEDVSAAARWARESGLASELYIMGYSYGGYMTLCALTMKPGLFKAGVAGASVVDWEEMYELSDAAFRNFIEQLTGGSREIMRSRSPINHVDRIKEPLALIHPQNDSRTPLKPLLRLMGELLARGKTFEAHIIPDAGHAINTMEDAVKILLPAVFFLATQRERR</sequence>
<keyword id="KW-0002">3D-structure</keyword>
<keyword id="KW-0963">Cytoplasm</keyword>
<keyword id="KW-0378">Hydrolase</keyword>
<keyword id="KW-1185">Reference proteome</keyword>
<feature type="chain" id="PRO_0000122436" description="Acylamino-acid-releasing enzyme">
    <location>
        <begin position="1"/>
        <end position="582"/>
    </location>
</feature>
<feature type="active site" description="Charge relay system" evidence="1">
    <location>
        <position position="445"/>
    </location>
</feature>
<feature type="active site" description="Charge relay system" evidence="1">
    <location>
        <position position="524"/>
    </location>
</feature>
<feature type="active site" description="Charge relay system" evidence="1">
    <location>
        <position position="556"/>
    </location>
</feature>
<feature type="helix" evidence="5">
    <location>
        <begin position="9"/>
        <end position="21"/>
    </location>
</feature>
<feature type="strand" evidence="5">
    <location>
        <begin position="24"/>
        <end position="31"/>
    </location>
</feature>
<feature type="turn" evidence="5">
    <location>
        <begin position="32"/>
        <end position="34"/>
    </location>
</feature>
<feature type="strand" evidence="5">
    <location>
        <begin position="35"/>
        <end position="42"/>
    </location>
</feature>
<feature type="strand" evidence="5">
    <location>
        <begin position="45"/>
        <end position="52"/>
    </location>
</feature>
<feature type="strand" evidence="5">
    <location>
        <begin position="55"/>
        <end position="58"/>
    </location>
</feature>
<feature type="strand" evidence="5">
    <location>
        <begin position="65"/>
        <end position="67"/>
    </location>
</feature>
<feature type="strand" evidence="5">
    <location>
        <begin position="75"/>
        <end position="82"/>
    </location>
</feature>
<feature type="strand" evidence="5">
    <location>
        <begin position="90"/>
        <end position="96"/>
    </location>
</feature>
<feature type="strand" evidence="6">
    <location>
        <begin position="103"/>
        <end position="105"/>
    </location>
</feature>
<feature type="strand" evidence="5">
    <location>
        <begin position="111"/>
        <end position="119"/>
    </location>
</feature>
<feature type="strand" evidence="5">
    <location>
        <begin position="124"/>
        <end position="129"/>
    </location>
</feature>
<feature type="strand" evidence="5">
    <location>
        <begin position="134"/>
        <end position="140"/>
    </location>
</feature>
<feature type="strand" evidence="5">
    <location>
        <begin position="143"/>
        <end position="152"/>
    </location>
</feature>
<feature type="strand" evidence="5">
    <location>
        <begin position="154"/>
        <end position="160"/>
    </location>
</feature>
<feature type="strand" evidence="5">
    <location>
        <begin position="163"/>
        <end position="171"/>
    </location>
</feature>
<feature type="strand" evidence="5">
    <location>
        <begin position="174"/>
        <end position="181"/>
    </location>
</feature>
<feature type="turn" evidence="5">
    <location>
        <begin position="182"/>
        <end position="184"/>
    </location>
</feature>
<feature type="strand" evidence="5">
    <location>
        <begin position="188"/>
        <end position="190"/>
    </location>
</feature>
<feature type="strand" evidence="5">
    <location>
        <begin position="196"/>
        <end position="202"/>
    </location>
</feature>
<feature type="strand" evidence="5">
    <location>
        <begin position="208"/>
        <end position="213"/>
    </location>
</feature>
<feature type="strand" evidence="5">
    <location>
        <begin position="218"/>
        <end position="223"/>
    </location>
</feature>
<feature type="turn" evidence="5">
    <location>
        <begin position="225"/>
        <end position="227"/>
    </location>
</feature>
<feature type="strand" evidence="5">
    <location>
        <begin position="230"/>
        <end position="232"/>
    </location>
</feature>
<feature type="strand" evidence="6">
    <location>
        <begin position="236"/>
        <end position="238"/>
    </location>
</feature>
<feature type="helix" evidence="5">
    <location>
        <begin position="239"/>
        <end position="243"/>
    </location>
</feature>
<feature type="strand" evidence="5">
    <location>
        <begin position="246"/>
        <end position="253"/>
    </location>
</feature>
<feature type="strand" evidence="4">
    <location>
        <begin position="255"/>
        <end position="257"/>
    </location>
</feature>
<feature type="strand" evidence="5">
    <location>
        <begin position="259"/>
        <end position="265"/>
    </location>
</feature>
<feature type="strand" evidence="5">
    <location>
        <begin position="268"/>
        <end position="273"/>
    </location>
</feature>
<feature type="strand" evidence="5">
    <location>
        <begin position="276"/>
        <end position="278"/>
    </location>
</feature>
<feature type="strand" evidence="5">
    <location>
        <begin position="282"/>
        <end position="291"/>
    </location>
</feature>
<feature type="strand" evidence="5">
    <location>
        <begin position="294"/>
        <end position="301"/>
    </location>
</feature>
<feature type="strand" evidence="5">
    <location>
        <begin position="304"/>
        <end position="311"/>
    </location>
</feature>
<feature type="turn" evidence="3">
    <location>
        <begin position="312"/>
        <end position="314"/>
    </location>
</feature>
<feature type="strand" evidence="5">
    <location>
        <begin position="316"/>
        <end position="318"/>
    </location>
</feature>
<feature type="helix" evidence="5">
    <location>
        <begin position="324"/>
        <end position="328"/>
    </location>
</feature>
<feature type="strand" evidence="5">
    <location>
        <begin position="330"/>
        <end position="339"/>
    </location>
</feature>
<feature type="strand" evidence="5">
    <location>
        <begin position="345"/>
        <end position="353"/>
    </location>
</feature>
<feature type="strand" evidence="5">
    <location>
        <begin position="358"/>
        <end position="366"/>
    </location>
</feature>
<feature type="strand" evidence="5">
    <location>
        <begin position="368"/>
        <end position="371"/>
    </location>
</feature>
<feature type="helix" evidence="5">
    <location>
        <begin position="380"/>
        <end position="387"/>
    </location>
</feature>
<feature type="strand" evidence="5">
    <location>
        <begin position="391"/>
        <end position="395"/>
    </location>
</feature>
<feature type="strand" evidence="5">
    <location>
        <begin position="401"/>
        <end position="403"/>
    </location>
</feature>
<feature type="helix" evidence="5">
    <location>
        <begin position="405"/>
        <end position="409"/>
    </location>
</feature>
<feature type="turn" evidence="5">
    <location>
        <begin position="410"/>
        <end position="413"/>
    </location>
</feature>
<feature type="turn" evidence="5">
    <location>
        <begin position="415"/>
        <end position="417"/>
    </location>
</feature>
<feature type="helix" evidence="5">
    <location>
        <begin position="418"/>
        <end position="432"/>
    </location>
</feature>
<feature type="strand" evidence="5">
    <location>
        <begin position="436"/>
        <end position="444"/>
    </location>
</feature>
<feature type="helix" evidence="5">
    <location>
        <begin position="446"/>
        <end position="457"/>
    </location>
</feature>
<feature type="strand" evidence="5">
    <location>
        <begin position="461"/>
        <end position="463"/>
    </location>
</feature>
<feature type="strand" evidence="5">
    <location>
        <begin position="465"/>
        <end position="469"/>
    </location>
</feature>
<feature type="helix" evidence="5">
    <location>
        <begin position="474"/>
        <end position="479"/>
    </location>
</feature>
<feature type="helix" evidence="5">
    <location>
        <begin position="483"/>
        <end position="492"/>
    </location>
</feature>
<feature type="turn" evidence="5">
    <location>
        <begin position="493"/>
        <end position="495"/>
    </location>
</feature>
<feature type="helix" evidence="5">
    <location>
        <begin position="497"/>
        <end position="502"/>
    </location>
</feature>
<feature type="helix" evidence="5">
    <location>
        <begin position="505"/>
        <end position="511"/>
    </location>
</feature>
<feature type="strand" evidence="5">
    <location>
        <begin position="516"/>
        <end position="521"/>
    </location>
</feature>
<feature type="strand" evidence="5">
    <location>
        <begin position="525"/>
        <end position="527"/>
    </location>
</feature>
<feature type="helix" evidence="5">
    <location>
        <begin position="529"/>
        <end position="541"/>
    </location>
</feature>
<feature type="strand" evidence="5">
    <location>
        <begin position="546"/>
        <end position="551"/>
    </location>
</feature>
<feature type="helix" evidence="5">
    <location>
        <begin position="561"/>
        <end position="579"/>
    </location>
</feature>